<comment type="function">
    <text>Hydrolyzes 1,4-beta linked polysaccharide backbones of mannans, one of the major hemicellulose components in hardwoods and softwoods. Shows very high activity against mannohexaose but not against mannopentaose and smaller mannooligosaccharides. The major products released from mannooligosaccharide hydrolysis are mannose and mannobiose. The reiterated 40 AA domain is involved in binding the cellulase-hemicellulase complex.</text>
</comment>
<comment type="catalytic activity">
    <reaction>
        <text>Random hydrolysis of (1-&gt;4)-beta-D-mannosidic linkages in mannans, galactomannans and glucomannans.</text>
        <dbReference type="EC" id="3.2.1.78"/>
    </reaction>
</comment>
<comment type="domain">
    <text>Consists of a catalytic N-terminal domain linked to a reiterated non-catalytic C-terminal domain.</text>
</comment>
<comment type="similarity">
    <text evidence="5 6">Belongs to the glycosyl hydrolase 26 family.</text>
</comment>
<gene>
    <name type="primary">MANA</name>
</gene>
<proteinExistence type="evidence at transcript level"/>
<sequence length="606" mass="68055">MKSLNVILTLLSLIISVLSKKVYYEAEDGKLNGITVFKELSGFSGKGYVGRFENPGNSVTVTVDAPATGMYDLSIIYCANMGQKINSLTVNDQSVGDITFTENTKFETKDVGAVYLNKGKNTIGLVSSWGWMWVDAFVINDAPNAAKDVSSKLNPTLVNPKAIPAAKKLYDFLKTNYGKRILSGQVGAAGQAGDEGQEIQRIQKATGKLPAVWNMDFIFESNDCTWRPQNPDITEMAINWWKKYEGKGIMAAQWHWNIAGKTGDFAFYSKDTTFNLENAVTEGTWEYEKIIKDIDRVSGHIKKLQAVNMPLIWRPLHENNGDWFWWGNNPKACAKLWKILYERMVNYHGLNNLIWLWNGNNDANTPVDYIDIIGVDIYANDHGPQTTAYNTHFDFYGGKKMVVLSENGRIPDIQQCVDQDVWWGYFQTWNSEFILQDSYHTDAQLKEYFNHKTVMNMDELPSFNVDSYNGDSGSSHNGNSESNSNTGNSDECWSINLGYPCCIGDYVVTTDENGDWGVENNEWCGIVHKSCWSEPLGYPCCVGNTVISADESGDWGVENNEWCGIVHKSCWAEFLGYPCCVGNTVISTDEFGDWGVENDDWCGILN</sequence>
<evidence type="ECO:0000250" key="1">
    <source>
        <dbReference type="UniProtKB" id="B4XC07"/>
    </source>
</evidence>
<evidence type="ECO:0000255" key="2"/>
<evidence type="ECO:0000255" key="3">
    <source>
        <dbReference type="PROSITE-ProRule" id="PRU00523"/>
    </source>
</evidence>
<evidence type="ECO:0000255" key="4">
    <source>
        <dbReference type="PROSITE-ProRule" id="PRU01099"/>
    </source>
</evidence>
<evidence type="ECO:0000255" key="5">
    <source>
        <dbReference type="PROSITE-ProRule" id="PRU01100"/>
    </source>
</evidence>
<evidence type="ECO:0000305" key="6"/>
<protein>
    <recommendedName>
        <fullName>Mannan endo-1,4-beta-mannosidase A</fullName>
        <ecNumber>3.2.1.78</ecNumber>
    </recommendedName>
    <alternativeName>
        <fullName>1,4-beta-D-mannan mannanohydrolase A</fullName>
    </alternativeName>
    <alternativeName>
        <fullName>Beta-mannanase A</fullName>
    </alternativeName>
</protein>
<feature type="signal peptide" evidence="2">
    <location>
        <begin position="1"/>
        <end position="19"/>
    </location>
</feature>
<feature type="chain" id="PRO_0000012174" description="Mannan endo-1,4-beta-mannosidase A">
    <location>
        <begin position="20"/>
        <end position="606"/>
    </location>
</feature>
<feature type="domain" description="CBM6" evidence="3">
    <location>
        <begin position="22"/>
        <end position="140"/>
    </location>
</feature>
<feature type="domain" description="GH26" evidence="5">
    <location>
        <begin position="164"/>
        <end position="458"/>
    </location>
</feature>
<feature type="domain" description="CBM10 1" evidence="4">
    <location>
        <begin position="491"/>
        <end position="527"/>
    </location>
</feature>
<feature type="domain" description="CBM10 2" evidence="4">
    <location>
        <begin position="530"/>
        <end position="566"/>
    </location>
</feature>
<feature type="domain" description="CBM10 3" evidence="4">
    <location>
        <begin position="569"/>
        <end position="605"/>
    </location>
</feature>
<feature type="region of interest" description="Linker">
    <location>
        <begin position="472"/>
        <end position="489"/>
    </location>
</feature>
<feature type="active site" description="Proton donor" evidence="5">
    <location>
        <position position="318"/>
    </location>
</feature>
<feature type="active site" description="Nucleophile" evidence="5">
    <location>
        <position position="406"/>
    </location>
</feature>
<feature type="binding site" evidence="1">
    <location>
        <position position="285"/>
    </location>
    <ligand>
        <name>substrate</name>
    </ligand>
</feature>
<feature type="binding site" evidence="1">
    <location>
        <position position="323"/>
    </location>
    <ligand>
        <name>substrate</name>
    </ligand>
</feature>
<feature type="binding site" evidence="1">
    <location>
        <position position="378"/>
    </location>
    <ligand>
        <name>substrate</name>
    </ligand>
</feature>
<feature type="binding site" evidence="1">
    <location>
        <position position="493"/>
    </location>
    <ligand>
        <name>substrate</name>
    </ligand>
</feature>
<name>MANA_PIRSP</name>
<reference key="1">
    <citation type="journal article" date="1995" name="J. Biol. Chem.">
        <title>The conserved noncatalytic 40-residue sequence in cellulases and hemicellulases from anaerobic fungi functions as a protein docking domain.</title>
        <authorList>
            <person name="Fanutti C."/>
            <person name="Ponyi T."/>
            <person name="Black G.W."/>
            <person name="Hazlewood G.P."/>
            <person name="Gilbert H.J."/>
        </authorList>
    </citation>
    <scope>NUCLEOTIDE SEQUENCE [MRNA]</scope>
</reference>
<dbReference type="EC" id="3.2.1.78"/>
<dbReference type="EMBL" id="X91857">
    <property type="protein sequence ID" value="CAA62968.1"/>
    <property type="molecule type" value="mRNA"/>
</dbReference>
<dbReference type="SMR" id="P55296"/>
<dbReference type="CAZy" id="CBM35">
    <property type="family name" value="Carbohydrate-Binding Module Family 35"/>
</dbReference>
<dbReference type="CAZy" id="GH26">
    <property type="family name" value="Glycoside Hydrolase Family 26"/>
</dbReference>
<dbReference type="GO" id="GO:0030246">
    <property type="term" value="F:carbohydrate binding"/>
    <property type="evidence" value="ECO:0007669"/>
    <property type="project" value="InterPro"/>
</dbReference>
<dbReference type="GO" id="GO:0016985">
    <property type="term" value="F:mannan endo-1,4-beta-mannosidase activity"/>
    <property type="evidence" value="ECO:0007669"/>
    <property type="project" value="UniProtKB-EC"/>
</dbReference>
<dbReference type="GO" id="GO:0006080">
    <property type="term" value="P:substituted mannan metabolic process"/>
    <property type="evidence" value="ECO:0007669"/>
    <property type="project" value="InterPro"/>
</dbReference>
<dbReference type="CDD" id="cd04086">
    <property type="entry name" value="CBM35_mannanase-like"/>
    <property type="match status" value="1"/>
</dbReference>
<dbReference type="Gene3D" id="3.90.1220.10">
    <property type="entry name" value="Cellulose docking domain, dockering"/>
    <property type="match status" value="3"/>
</dbReference>
<dbReference type="Gene3D" id="2.60.120.260">
    <property type="entry name" value="Galactose-binding domain-like"/>
    <property type="match status" value="1"/>
</dbReference>
<dbReference type="Gene3D" id="3.20.20.80">
    <property type="entry name" value="Glycosidases"/>
    <property type="match status" value="1"/>
</dbReference>
<dbReference type="InterPro" id="IPR002883">
    <property type="entry name" value="CBM10/Dockerin_dom"/>
</dbReference>
<dbReference type="InterPro" id="IPR005084">
    <property type="entry name" value="CBM6"/>
</dbReference>
<dbReference type="InterPro" id="IPR009034">
    <property type="entry name" value="Dockerin_dom_fun_sf"/>
</dbReference>
<dbReference type="InterPro" id="IPR008979">
    <property type="entry name" value="Galactose-bd-like_sf"/>
</dbReference>
<dbReference type="InterPro" id="IPR022790">
    <property type="entry name" value="GH26_dom"/>
</dbReference>
<dbReference type="InterPro" id="IPR000805">
    <property type="entry name" value="Glyco_hydro_26"/>
</dbReference>
<dbReference type="InterPro" id="IPR017853">
    <property type="entry name" value="Glycoside_hydrolase_SF"/>
</dbReference>
<dbReference type="PANTHER" id="PTHR40079:SF4">
    <property type="entry name" value="GH26 DOMAIN-CONTAINING PROTEIN-RELATED"/>
    <property type="match status" value="1"/>
</dbReference>
<dbReference type="PANTHER" id="PTHR40079">
    <property type="entry name" value="MANNAN ENDO-1,4-BETA-MANNOSIDASE E-RELATED"/>
    <property type="match status" value="1"/>
</dbReference>
<dbReference type="Pfam" id="PF02013">
    <property type="entry name" value="CBM_10"/>
    <property type="match status" value="3"/>
</dbReference>
<dbReference type="Pfam" id="PF16990">
    <property type="entry name" value="CBM_35"/>
    <property type="match status" value="1"/>
</dbReference>
<dbReference type="Pfam" id="PF02156">
    <property type="entry name" value="Glyco_hydro_26"/>
    <property type="match status" value="1"/>
</dbReference>
<dbReference type="PRINTS" id="PR00739">
    <property type="entry name" value="GLHYDRLASE26"/>
</dbReference>
<dbReference type="SUPFAM" id="SSF51445">
    <property type="entry name" value="(Trans)glycosidases"/>
    <property type="match status" value="1"/>
</dbReference>
<dbReference type="SUPFAM" id="SSF64571">
    <property type="entry name" value="Cellulose docking domain, dockering"/>
    <property type="match status" value="3"/>
</dbReference>
<dbReference type="SUPFAM" id="SSF49785">
    <property type="entry name" value="Galactose-binding domain-like"/>
    <property type="match status" value="1"/>
</dbReference>
<dbReference type="PROSITE" id="PS51763">
    <property type="entry name" value="CBM10"/>
    <property type="match status" value="3"/>
</dbReference>
<dbReference type="PROSITE" id="PS51175">
    <property type="entry name" value="CBM6"/>
    <property type="match status" value="1"/>
</dbReference>
<dbReference type="PROSITE" id="PS51764">
    <property type="entry name" value="GH26"/>
    <property type="match status" value="1"/>
</dbReference>
<accession>P55296</accession>
<organism>
    <name type="scientific">Piromyces sp</name>
    <dbReference type="NCBI Taxonomy" id="45796"/>
    <lineage>
        <taxon>Eukaryota</taxon>
        <taxon>Fungi</taxon>
        <taxon>Fungi incertae sedis</taxon>
        <taxon>Chytridiomycota</taxon>
        <taxon>Chytridiomycota incertae sedis</taxon>
        <taxon>Neocallimastigomycetes</taxon>
        <taxon>Neocallimastigales</taxon>
        <taxon>Neocallimastigaceae</taxon>
        <taxon>Piromyces</taxon>
    </lineage>
</organism>
<keyword id="KW-0326">Glycosidase</keyword>
<keyword id="KW-0378">Hydrolase</keyword>
<keyword id="KW-0677">Repeat</keyword>
<keyword id="KW-0732">Signal</keyword>